<proteinExistence type="evidence at protein level"/>
<gene>
    <name evidence="1" type="primary">menD</name>
    <name type="ordered locus">Rv0555</name>
</gene>
<sequence length="554" mass="57836">MNPSTTQARVVVDELIRGGVRDVVLCPGSRNAPLAFALQDADRSGRIRLHVRIDERTAGYLAIGLAIGAGAPVCVAMTSGTAVANLGPAVVEANYARVPLIVLSANRPYELLGTGANQTMEQLGYFGTQVRASISLGLAEDAPERTSALNATWRSATCRVLAAATGARTANAGPVHFDIPLREPLVPDPEPLGAVTPPGRPAGKPWTYTPPVTFDQPLDIDLSVDTVVISGHGAGVHPNLAALPTVAEPTAPRSGDNPLHPLALPLLRPQQVIMLGRPTLHRPVSVLLADAEVPVFALTTGPRWPDVSGNSQATGTRAVTTGAPRPAWLDRCAAMNRHAIAAVREQLAAHPLTTGLHVAAAVSHALRPGDQLVLGASNPVRDVALAGLDTRGIRVRSNRGVAGIDGTVSTAIGAALAYEGAHERTGSPDSPPRTIALIGDLTFVHDSSGLLIGPTEPIPRSLTIVVSNDNGGGIFELLEQGDPRFSDVSSRIFGTPHDVDVGALCRAYHVESRQIEVDELGPTLDQPGAGMRVLEVKADRSSLRQLHAAIKAAL</sequence>
<comment type="function">
    <text evidence="1">Catalyzes the thiamine diphosphate-dependent decarboxylation of 2-oxoglutarate and the subsequent addition of the resulting succinic semialdehyde-thiamine pyrophosphate anion to isochorismate to yield 2-succinyl-5-enolpyruvyl-6-hydroxy-3-cyclohexene-1-carboxylate (SEPHCHC).</text>
</comment>
<comment type="catalytic activity">
    <reaction evidence="1">
        <text>isochorismate + 2-oxoglutarate + H(+) = 5-enolpyruvoyl-6-hydroxy-2-succinyl-cyclohex-3-ene-1-carboxylate + CO2</text>
        <dbReference type="Rhea" id="RHEA:25593"/>
        <dbReference type="ChEBI" id="CHEBI:15378"/>
        <dbReference type="ChEBI" id="CHEBI:16526"/>
        <dbReference type="ChEBI" id="CHEBI:16810"/>
        <dbReference type="ChEBI" id="CHEBI:29780"/>
        <dbReference type="ChEBI" id="CHEBI:58818"/>
        <dbReference type="EC" id="2.2.1.9"/>
    </reaction>
</comment>
<comment type="cofactor">
    <cofactor evidence="1">
        <name>Mg(2+)</name>
        <dbReference type="ChEBI" id="CHEBI:18420"/>
    </cofactor>
    <cofactor evidence="1">
        <name>Mn(2+)</name>
        <dbReference type="ChEBI" id="CHEBI:29035"/>
    </cofactor>
</comment>
<comment type="cofactor">
    <cofactor evidence="1">
        <name>thiamine diphosphate</name>
        <dbReference type="ChEBI" id="CHEBI:58937"/>
    </cofactor>
    <text evidence="1">Binds 1 thiamine pyrophosphate per subunit.</text>
</comment>
<comment type="pathway">
    <text evidence="1">Quinol/quinone metabolism; 1,4-dihydroxy-2-naphthoate biosynthesis; 1,4-dihydroxy-2-naphthoate from chorismate: step 2/7.</text>
</comment>
<comment type="pathway">
    <text evidence="1">Quinol/quinone metabolism; menaquinone biosynthesis.</text>
</comment>
<comment type="subunit">
    <text evidence="1">Homodimer.</text>
</comment>
<comment type="miscellaneous">
    <text>Was identified as a high-confidence drug target.</text>
</comment>
<comment type="similarity">
    <text evidence="1">Belongs to the TPP enzyme family. MenD subfamily.</text>
</comment>
<keyword id="KW-0002">3D-structure</keyword>
<keyword id="KW-0460">Magnesium</keyword>
<keyword id="KW-0464">Manganese</keyword>
<keyword id="KW-0474">Menaquinone biosynthesis</keyword>
<keyword id="KW-0479">Metal-binding</keyword>
<keyword id="KW-1185">Reference proteome</keyword>
<keyword id="KW-0786">Thiamine pyrophosphate</keyword>
<keyword id="KW-0808">Transferase</keyword>
<name>MEND_MYCTU</name>
<organism>
    <name type="scientific">Mycobacterium tuberculosis (strain ATCC 25618 / H37Rv)</name>
    <dbReference type="NCBI Taxonomy" id="83332"/>
    <lineage>
        <taxon>Bacteria</taxon>
        <taxon>Bacillati</taxon>
        <taxon>Actinomycetota</taxon>
        <taxon>Actinomycetes</taxon>
        <taxon>Mycobacteriales</taxon>
        <taxon>Mycobacteriaceae</taxon>
        <taxon>Mycobacterium</taxon>
        <taxon>Mycobacterium tuberculosis complex</taxon>
    </lineage>
</organism>
<accession>P9WK11</accession>
<accession>L0T6U9</accession>
<accession>O06421</accession>
<accession>Q7D9N1</accession>
<protein>
    <recommendedName>
        <fullName evidence="1">2-succinyl-5-enolpyruvyl-6-hydroxy-3-cyclohexene-1-carboxylate synthase</fullName>
        <shortName evidence="1">SEPHCHC synthase</shortName>
        <ecNumber evidence="1">2.2.1.9</ecNumber>
    </recommendedName>
    <alternativeName>
        <fullName evidence="1">Menaquinone biosynthesis protein MenD</fullName>
    </alternativeName>
</protein>
<reference key="1">
    <citation type="journal article" date="1998" name="Nature">
        <title>Deciphering the biology of Mycobacterium tuberculosis from the complete genome sequence.</title>
        <authorList>
            <person name="Cole S.T."/>
            <person name="Brosch R."/>
            <person name="Parkhill J."/>
            <person name="Garnier T."/>
            <person name="Churcher C.M."/>
            <person name="Harris D.E."/>
            <person name="Gordon S.V."/>
            <person name="Eiglmeier K."/>
            <person name="Gas S."/>
            <person name="Barry C.E. III"/>
            <person name="Tekaia F."/>
            <person name="Badcock K."/>
            <person name="Basham D."/>
            <person name="Brown D."/>
            <person name="Chillingworth T."/>
            <person name="Connor R."/>
            <person name="Davies R.M."/>
            <person name="Devlin K."/>
            <person name="Feltwell T."/>
            <person name="Gentles S."/>
            <person name="Hamlin N."/>
            <person name="Holroyd S."/>
            <person name="Hornsby T."/>
            <person name="Jagels K."/>
            <person name="Krogh A."/>
            <person name="McLean J."/>
            <person name="Moule S."/>
            <person name="Murphy L.D."/>
            <person name="Oliver S."/>
            <person name="Osborne J."/>
            <person name="Quail M.A."/>
            <person name="Rajandream M.A."/>
            <person name="Rogers J."/>
            <person name="Rutter S."/>
            <person name="Seeger K."/>
            <person name="Skelton S."/>
            <person name="Squares S."/>
            <person name="Squares R."/>
            <person name="Sulston J.E."/>
            <person name="Taylor K."/>
            <person name="Whitehead S."/>
            <person name="Barrell B.G."/>
        </authorList>
    </citation>
    <scope>NUCLEOTIDE SEQUENCE [LARGE SCALE GENOMIC DNA]</scope>
    <source>
        <strain>ATCC 25618 / H37Rv</strain>
    </source>
</reference>
<reference key="2">
    <citation type="journal article" date="2008" name="BMC Syst. Biol.">
        <title>targetTB: a target identification pipeline for Mycobacterium tuberculosis through an interactome, reactome and genome-scale structural analysis.</title>
        <authorList>
            <person name="Raman K."/>
            <person name="Yeturu K."/>
            <person name="Chandra N."/>
        </authorList>
    </citation>
    <scope>IDENTIFICATION AS A DRUG TARGET [LARGE SCALE ANALYSIS]</scope>
</reference>
<reference key="3">
    <citation type="journal article" date="2011" name="Mol. Cell. Proteomics">
        <title>Proteogenomic analysis of Mycobacterium tuberculosis by high resolution mass spectrometry.</title>
        <authorList>
            <person name="Kelkar D.S."/>
            <person name="Kumar D."/>
            <person name="Kumar P."/>
            <person name="Balakrishnan L."/>
            <person name="Muthusamy B."/>
            <person name="Yadav A.K."/>
            <person name="Shrivastava P."/>
            <person name="Marimuthu A."/>
            <person name="Anand S."/>
            <person name="Sundaram H."/>
            <person name="Kingsbury R."/>
            <person name="Harsha H.C."/>
            <person name="Nair B."/>
            <person name="Prasad T.S."/>
            <person name="Chauhan D.S."/>
            <person name="Katoch K."/>
            <person name="Katoch V.M."/>
            <person name="Kumar P."/>
            <person name="Chaerkady R."/>
            <person name="Ramachandran S."/>
            <person name="Dash D."/>
            <person name="Pandey A."/>
        </authorList>
    </citation>
    <scope>IDENTIFICATION BY MASS SPECTROMETRY [LARGE SCALE ANALYSIS]</scope>
    <source>
        <strain>ATCC 25618 / H37Rv</strain>
    </source>
</reference>
<feature type="chain" id="PRO_0000341784" description="2-succinyl-5-enolpyruvyl-6-hydroxy-3-cyclohexene-1-carboxylate synthase">
    <location>
        <begin position="1"/>
        <end position="554"/>
    </location>
</feature>
<feature type="helix" evidence="2">
    <location>
        <begin position="3"/>
        <end position="17"/>
    </location>
</feature>
<feature type="strand" evidence="2">
    <location>
        <begin position="22"/>
        <end position="25"/>
    </location>
</feature>
<feature type="helix" evidence="2">
    <location>
        <begin position="35"/>
        <end position="43"/>
    </location>
</feature>
<feature type="strand" evidence="2">
    <location>
        <begin position="46"/>
        <end position="51"/>
    </location>
</feature>
<feature type="helix" evidence="2">
    <location>
        <begin position="55"/>
        <end position="67"/>
    </location>
</feature>
<feature type="turn" evidence="2">
    <location>
        <begin position="68"/>
        <end position="70"/>
    </location>
</feature>
<feature type="strand" evidence="2">
    <location>
        <begin position="73"/>
        <end position="76"/>
    </location>
</feature>
<feature type="strand" evidence="3">
    <location>
        <begin position="79"/>
        <end position="81"/>
    </location>
</feature>
<feature type="helix" evidence="2">
    <location>
        <begin position="82"/>
        <end position="96"/>
    </location>
</feature>
<feature type="strand" evidence="2">
    <location>
        <begin position="100"/>
        <end position="104"/>
    </location>
</feature>
<feature type="helix" evidence="4">
    <location>
        <begin position="109"/>
        <end position="111"/>
    </location>
</feature>
<feature type="turn" evidence="4">
    <location>
        <begin position="112"/>
        <end position="115"/>
    </location>
</feature>
<feature type="turn" evidence="4">
    <location>
        <begin position="123"/>
        <end position="126"/>
    </location>
</feature>
<feature type="helix" evidence="2">
    <location>
        <begin position="127"/>
        <end position="129"/>
    </location>
</feature>
<feature type="strand" evidence="2">
    <location>
        <begin position="130"/>
        <end position="135"/>
    </location>
</feature>
<feature type="helix" evidence="2">
    <location>
        <begin position="143"/>
        <end position="145"/>
    </location>
</feature>
<feature type="helix" evidence="2">
    <location>
        <begin position="146"/>
        <end position="165"/>
    </location>
</feature>
<feature type="turn" evidence="2">
    <location>
        <begin position="166"/>
        <end position="169"/>
    </location>
</feature>
<feature type="strand" evidence="2">
    <location>
        <begin position="175"/>
        <end position="178"/>
    </location>
</feature>
<feature type="strand" evidence="5">
    <location>
        <begin position="189"/>
        <end position="193"/>
    </location>
</feature>
<feature type="helix" evidence="2">
    <location>
        <begin position="201"/>
        <end position="203"/>
    </location>
</feature>
<feature type="strand" evidence="4">
    <location>
        <begin position="206"/>
        <end position="208"/>
    </location>
</feature>
<feature type="strand" evidence="4">
    <location>
        <begin position="213"/>
        <end position="215"/>
    </location>
</feature>
<feature type="strand" evidence="2">
    <location>
        <begin position="217"/>
        <end position="221"/>
    </location>
</feature>
<feature type="strand" evidence="2">
    <location>
        <begin position="226"/>
        <end position="230"/>
    </location>
</feature>
<feature type="helix" evidence="2">
    <location>
        <begin position="238"/>
        <end position="240"/>
    </location>
</feature>
<feature type="strand" evidence="7">
    <location>
        <begin position="241"/>
        <end position="243"/>
    </location>
</feature>
<feature type="strand" evidence="2">
    <location>
        <begin position="245"/>
        <end position="247"/>
    </location>
</feature>
<feature type="strand" evidence="2">
    <location>
        <begin position="254"/>
        <end position="256"/>
    </location>
</feature>
<feature type="helix" evidence="2">
    <location>
        <begin position="261"/>
        <end position="266"/>
    </location>
</feature>
<feature type="strand" evidence="2">
    <location>
        <begin position="270"/>
        <end position="277"/>
    </location>
</feature>
<feature type="helix" evidence="2">
    <location>
        <begin position="282"/>
        <end position="288"/>
    </location>
</feature>
<feature type="strand" evidence="2">
    <location>
        <begin position="295"/>
        <end position="298"/>
    </location>
</feature>
<feature type="strand" evidence="2">
    <location>
        <begin position="300"/>
        <end position="302"/>
    </location>
</feature>
<feature type="strand" evidence="2">
    <location>
        <begin position="311"/>
        <end position="322"/>
    </location>
</feature>
<feature type="helix" evidence="2">
    <location>
        <begin position="326"/>
        <end position="349"/>
    </location>
</feature>
<feature type="strand" evidence="3">
    <location>
        <begin position="350"/>
        <end position="352"/>
    </location>
</feature>
<feature type="helix" evidence="2">
    <location>
        <begin position="355"/>
        <end position="365"/>
    </location>
</feature>
<feature type="strand" evidence="2">
    <location>
        <begin position="371"/>
        <end position="374"/>
    </location>
</feature>
<feature type="helix" evidence="2">
    <location>
        <begin position="378"/>
        <end position="386"/>
    </location>
</feature>
<feature type="strand" evidence="2">
    <location>
        <begin position="394"/>
        <end position="396"/>
    </location>
</feature>
<feature type="turn" evidence="2">
    <location>
        <begin position="399"/>
        <end position="401"/>
    </location>
</feature>
<feature type="helix" evidence="2">
    <location>
        <begin position="407"/>
        <end position="425"/>
    </location>
</feature>
<feature type="strand" evidence="2">
    <location>
        <begin position="434"/>
        <end position="439"/>
    </location>
</feature>
<feature type="helix" evidence="2">
    <location>
        <begin position="440"/>
        <end position="445"/>
    </location>
</feature>
<feature type="helix" evidence="2">
    <location>
        <begin position="447"/>
        <end position="450"/>
    </location>
</feature>
<feature type="strand" evidence="2">
    <location>
        <begin position="460"/>
        <end position="470"/>
    </location>
</feature>
<feature type="helix" evidence="4">
    <location>
        <begin position="473"/>
        <end position="477"/>
    </location>
</feature>
<feature type="helix" evidence="4">
    <location>
        <begin position="479"/>
        <end position="481"/>
    </location>
</feature>
<feature type="helix" evidence="4">
    <location>
        <begin position="483"/>
        <end position="485"/>
    </location>
</feature>
<feature type="helix" evidence="2">
    <location>
        <begin position="488"/>
        <end position="492"/>
    </location>
</feature>
<feature type="helix" evidence="2">
    <location>
        <begin position="501"/>
        <end position="507"/>
    </location>
</feature>
<feature type="strand" evidence="2">
    <location>
        <begin position="511"/>
        <end position="514"/>
    </location>
</feature>
<feature type="helix" evidence="2">
    <location>
        <begin position="517"/>
        <end position="519"/>
    </location>
</feature>
<feature type="helix" evidence="2">
    <location>
        <begin position="520"/>
        <end position="525"/>
    </location>
</feature>
<feature type="strand" evidence="2">
    <location>
        <begin position="530"/>
        <end position="537"/>
    </location>
</feature>
<feature type="strand" evidence="6">
    <location>
        <begin position="539"/>
        <end position="542"/>
    </location>
</feature>
<feature type="helix" evidence="2">
    <location>
        <begin position="543"/>
        <end position="553"/>
    </location>
</feature>
<dbReference type="EC" id="2.2.1.9" evidence="1"/>
<dbReference type="EMBL" id="AL123456">
    <property type="protein sequence ID" value="CCP43293.1"/>
    <property type="molecule type" value="Genomic_DNA"/>
</dbReference>
<dbReference type="PIR" id="F70548">
    <property type="entry name" value="F70548"/>
</dbReference>
<dbReference type="RefSeq" id="NP_215069.1">
    <property type="nucleotide sequence ID" value="NC_000962.3"/>
</dbReference>
<dbReference type="RefSeq" id="WP_003402927.1">
    <property type="nucleotide sequence ID" value="NZ_NVQJ01000036.1"/>
</dbReference>
<dbReference type="PDB" id="5ERX">
    <property type="method" value="X-ray"/>
    <property type="resolution" value="1.73 A"/>
    <property type="chains" value="A=1-554"/>
</dbReference>
<dbReference type="PDB" id="5ERY">
    <property type="method" value="X-ray"/>
    <property type="resolution" value="2.25 A"/>
    <property type="chains" value="A/B/C/D=1-554"/>
</dbReference>
<dbReference type="PDB" id="5ESD">
    <property type="method" value="X-ray"/>
    <property type="resolution" value="2.25 A"/>
    <property type="chains" value="A/B/C/D=1-554"/>
</dbReference>
<dbReference type="PDB" id="5ESO">
    <property type="method" value="X-ray"/>
    <property type="resolution" value="2.05 A"/>
    <property type="chains" value="A/B/C/D=1-554"/>
</dbReference>
<dbReference type="PDB" id="5ESS">
    <property type="method" value="X-ray"/>
    <property type="resolution" value="2.20 A"/>
    <property type="chains" value="A/B/C/D=1-554"/>
</dbReference>
<dbReference type="PDB" id="5ESU">
    <property type="method" value="X-ray"/>
    <property type="resolution" value="2.20 A"/>
    <property type="chains" value="A/B/C/D=1-554"/>
</dbReference>
<dbReference type="PDB" id="6O04">
    <property type="method" value="X-ray"/>
    <property type="resolution" value="2.50 A"/>
    <property type="chains" value="A/B/C/D=1-554"/>
</dbReference>
<dbReference type="PDB" id="6O0G">
    <property type="method" value="X-ray"/>
    <property type="resolution" value="2.40 A"/>
    <property type="chains" value="A/B/C/D=1-554"/>
</dbReference>
<dbReference type="PDB" id="6O0J">
    <property type="method" value="X-ray"/>
    <property type="resolution" value="2.35 A"/>
    <property type="chains" value="A/B/C/D=1-554"/>
</dbReference>
<dbReference type="PDB" id="6O0N">
    <property type="method" value="X-ray"/>
    <property type="resolution" value="3.03 A"/>
    <property type="chains" value="A/B/C/D=1-554"/>
</dbReference>
<dbReference type="PDBsum" id="5ERX"/>
<dbReference type="PDBsum" id="5ERY"/>
<dbReference type="PDBsum" id="5ESD"/>
<dbReference type="PDBsum" id="5ESO"/>
<dbReference type="PDBsum" id="5ESS"/>
<dbReference type="PDBsum" id="5ESU"/>
<dbReference type="PDBsum" id="6O04"/>
<dbReference type="PDBsum" id="6O0G"/>
<dbReference type="PDBsum" id="6O0J"/>
<dbReference type="PDBsum" id="6O0N"/>
<dbReference type="SMR" id="P9WK11"/>
<dbReference type="FunCoup" id="P9WK11">
    <property type="interactions" value="134"/>
</dbReference>
<dbReference type="STRING" id="83332.Rv0555"/>
<dbReference type="PaxDb" id="83332-Rv0555"/>
<dbReference type="GeneID" id="887554"/>
<dbReference type="KEGG" id="mtu:Rv0555"/>
<dbReference type="KEGG" id="mtv:RVBD_0555"/>
<dbReference type="TubercuList" id="Rv0555"/>
<dbReference type="eggNOG" id="COG1165">
    <property type="taxonomic scope" value="Bacteria"/>
</dbReference>
<dbReference type="InParanoid" id="P9WK11"/>
<dbReference type="OrthoDB" id="9791859at2"/>
<dbReference type="PhylomeDB" id="P9WK11"/>
<dbReference type="BRENDA" id="2.2.1.9">
    <property type="organism ID" value="3445"/>
</dbReference>
<dbReference type="UniPathway" id="UPA00079"/>
<dbReference type="UniPathway" id="UPA01057">
    <property type="reaction ID" value="UER00164"/>
</dbReference>
<dbReference type="Proteomes" id="UP000001584">
    <property type="component" value="Chromosome"/>
</dbReference>
<dbReference type="GO" id="GO:0005886">
    <property type="term" value="C:plasma membrane"/>
    <property type="evidence" value="ECO:0007005"/>
    <property type="project" value="MTBBASE"/>
</dbReference>
<dbReference type="GO" id="GO:0070204">
    <property type="term" value="F:2-succinyl-5-enolpyruvyl-6-hydroxy-3-cyclohexene-1-carboxylic-acid synthase activity"/>
    <property type="evidence" value="ECO:0007669"/>
    <property type="project" value="UniProtKB-UniRule"/>
</dbReference>
<dbReference type="GO" id="GO:0000287">
    <property type="term" value="F:magnesium ion binding"/>
    <property type="evidence" value="ECO:0007669"/>
    <property type="project" value="UniProtKB-UniRule"/>
</dbReference>
<dbReference type="GO" id="GO:0030145">
    <property type="term" value="F:manganese ion binding"/>
    <property type="evidence" value="ECO:0007669"/>
    <property type="project" value="UniProtKB-UniRule"/>
</dbReference>
<dbReference type="GO" id="GO:0030976">
    <property type="term" value="F:thiamine pyrophosphate binding"/>
    <property type="evidence" value="ECO:0007669"/>
    <property type="project" value="UniProtKB-UniRule"/>
</dbReference>
<dbReference type="GO" id="GO:0009234">
    <property type="term" value="P:menaquinone biosynthetic process"/>
    <property type="evidence" value="ECO:0007669"/>
    <property type="project" value="UniProtKB-UniRule"/>
</dbReference>
<dbReference type="CDD" id="cd07037">
    <property type="entry name" value="TPP_PYR_MenD"/>
    <property type="match status" value="1"/>
</dbReference>
<dbReference type="CDD" id="cd02009">
    <property type="entry name" value="TPP_SHCHC_synthase"/>
    <property type="match status" value="1"/>
</dbReference>
<dbReference type="FunFam" id="3.40.50.970:FF:000066">
    <property type="entry name" value="2-succinyl-5-enolpyruvyl-6-hydroxy-3-cyclohexene-1-carboxylate synthase"/>
    <property type="match status" value="1"/>
</dbReference>
<dbReference type="FunFam" id="3.40.50.970:FF:000068">
    <property type="entry name" value="2-succinyl-5-enolpyruvyl-6-hydroxy-3-cyclohexene-1-carboxylate synthase"/>
    <property type="match status" value="1"/>
</dbReference>
<dbReference type="Gene3D" id="3.40.50.970">
    <property type="match status" value="2"/>
</dbReference>
<dbReference type="Gene3D" id="3.40.50.1220">
    <property type="entry name" value="TPP-binding domain"/>
    <property type="match status" value="1"/>
</dbReference>
<dbReference type="HAMAP" id="MF_01659">
    <property type="entry name" value="MenD"/>
    <property type="match status" value="1"/>
</dbReference>
<dbReference type="InterPro" id="IPR004433">
    <property type="entry name" value="MenaQ_synth_MenD"/>
</dbReference>
<dbReference type="InterPro" id="IPR029061">
    <property type="entry name" value="THDP-binding"/>
</dbReference>
<dbReference type="InterPro" id="IPR012001">
    <property type="entry name" value="Thiamin_PyroP_enz_TPP-bd_dom"/>
</dbReference>
<dbReference type="NCBIfam" id="TIGR00173">
    <property type="entry name" value="menD"/>
    <property type="match status" value="1"/>
</dbReference>
<dbReference type="PANTHER" id="PTHR42916">
    <property type="entry name" value="2-SUCCINYL-5-ENOLPYRUVYL-6-HYDROXY-3-CYCLOHEXENE-1-CARBOXYLATE SYNTHASE"/>
    <property type="match status" value="1"/>
</dbReference>
<dbReference type="PANTHER" id="PTHR42916:SF1">
    <property type="entry name" value="PROTEIN PHYLLO, CHLOROPLASTIC"/>
    <property type="match status" value="1"/>
</dbReference>
<dbReference type="Pfam" id="PF02776">
    <property type="entry name" value="TPP_enzyme_N"/>
    <property type="match status" value="1"/>
</dbReference>
<dbReference type="PIRSF" id="PIRSF004983">
    <property type="entry name" value="MenD"/>
    <property type="match status" value="1"/>
</dbReference>
<dbReference type="SUPFAM" id="SSF52518">
    <property type="entry name" value="Thiamin diphosphate-binding fold (THDP-binding)"/>
    <property type="match status" value="2"/>
</dbReference>
<evidence type="ECO:0000255" key="1">
    <source>
        <dbReference type="HAMAP-Rule" id="MF_01659"/>
    </source>
</evidence>
<evidence type="ECO:0007829" key="2">
    <source>
        <dbReference type="PDB" id="5ERX"/>
    </source>
</evidence>
<evidence type="ECO:0007829" key="3">
    <source>
        <dbReference type="PDB" id="5ERY"/>
    </source>
</evidence>
<evidence type="ECO:0007829" key="4">
    <source>
        <dbReference type="PDB" id="5ESO"/>
    </source>
</evidence>
<evidence type="ECO:0007829" key="5">
    <source>
        <dbReference type="PDB" id="5ESS"/>
    </source>
</evidence>
<evidence type="ECO:0007829" key="6">
    <source>
        <dbReference type="PDB" id="6O0J"/>
    </source>
</evidence>
<evidence type="ECO:0007829" key="7">
    <source>
        <dbReference type="PDB" id="6O0N"/>
    </source>
</evidence>